<sequence length="339" mass="36994">MRRVTLFLNGSPSNGKVVAVYGTLSDLLSVASSKLGIKATSVYNGKGGLIDDIALIRDDDVLFVCEGEPFIDPQTDARPPGGLLGSHTDWLTLNVGGRYFTTTRSTLVNKEPDSMLAHMFKDKGVWGNKQDHRGAFLIDRSPEYFEPILNYLRHGQLIVNDGINLLGVLEEARFFGIDSLIEHLEVAIKNSQPPEDHSPISRKEFVRFLLATPTKSELRCQCANLQGVKMLCSNAEGASLRLCNFEDPSGLKANLEGANLKGVDMEGSQMTGINLRVATLKNAKLKNCNLRGATLAGTDLENCDLSGCDLQEANLRGSNVKGAIFEEMLTPLHMSQSVR</sequence>
<comment type="function">
    <text evidence="1">Substrate-specific adapter of a BCR (BTB-CUL3-RBX1) E3 ubiquitin-protein ligase complex, which mediates the ubiquitination of target proteins, leading to their degradation by the proteasome.</text>
</comment>
<comment type="pathway">
    <text evidence="1">Protein modification; protein ubiquitination.</text>
</comment>
<comment type="subunit">
    <text evidence="1">Forms pentamers. Component of a complex mades of five KCTD9 and five CUL3 subunits.</text>
</comment>
<gene>
    <name type="primary">Kctd9</name>
</gene>
<reference key="1">
    <citation type="journal article" date="2005" name="Science">
        <title>The transcriptional landscape of the mammalian genome.</title>
        <authorList>
            <person name="Carninci P."/>
            <person name="Kasukawa T."/>
            <person name="Katayama S."/>
            <person name="Gough J."/>
            <person name="Frith M.C."/>
            <person name="Maeda N."/>
            <person name="Oyama R."/>
            <person name="Ravasi T."/>
            <person name="Lenhard B."/>
            <person name="Wells C."/>
            <person name="Kodzius R."/>
            <person name="Shimokawa K."/>
            <person name="Bajic V.B."/>
            <person name="Brenner S.E."/>
            <person name="Batalov S."/>
            <person name="Forrest A.R."/>
            <person name="Zavolan M."/>
            <person name="Davis M.J."/>
            <person name="Wilming L.G."/>
            <person name="Aidinis V."/>
            <person name="Allen J.E."/>
            <person name="Ambesi-Impiombato A."/>
            <person name="Apweiler R."/>
            <person name="Aturaliya R.N."/>
            <person name="Bailey T.L."/>
            <person name="Bansal M."/>
            <person name="Baxter L."/>
            <person name="Beisel K.W."/>
            <person name="Bersano T."/>
            <person name="Bono H."/>
            <person name="Chalk A.M."/>
            <person name="Chiu K.P."/>
            <person name="Choudhary V."/>
            <person name="Christoffels A."/>
            <person name="Clutterbuck D.R."/>
            <person name="Crowe M.L."/>
            <person name="Dalla E."/>
            <person name="Dalrymple B.P."/>
            <person name="de Bono B."/>
            <person name="Della Gatta G."/>
            <person name="di Bernardo D."/>
            <person name="Down T."/>
            <person name="Engstrom P."/>
            <person name="Fagiolini M."/>
            <person name="Faulkner G."/>
            <person name="Fletcher C.F."/>
            <person name="Fukushima T."/>
            <person name="Furuno M."/>
            <person name="Futaki S."/>
            <person name="Gariboldi M."/>
            <person name="Georgii-Hemming P."/>
            <person name="Gingeras T.R."/>
            <person name="Gojobori T."/>
            <person name="Green R.E."/>
            <person name="Gustincich S."/>
            <person name="Harbers M."/>
            <person name="Hayashi Y."/>
            <person name="Hensch T.K."/>
            <person name="Hirokawa N."/>
            <person name="Hill D."/>
            <person name="Huminiecki L."/>
            <person name="Iacono M."/>
            <person name="Ikeo K."/>
            <person name="Iwama A."/>
            <person name="Ishikawa T."/>
            <person name="Jakt M."/>
            <person name="Kanapin A."/>
            <person name="Katoh M."/>
            <person name="Kawasawa Y."/>
            <person name="Kelso J."/>
            <person name="Kitamura H."/>
            <person name="Kitano H."/>
            <person name="Kollias G."/>
            <person name="Krishnan S.P."/>
            <person name="Kruger A."/>
            <person name="Kummerfeld S.K."/>
            <person name="Kurochkin I.V."/>
            <person name="Lareau L.F."/>
            <person name="Lazarevic D."/>
            <person name="Lipovich L."/>
            <person name="Liu J."/>
            <person name="Liuni S."/>
            <person name="McWilliam S."/>
            <person name="Madan Babu M."/>
            <person name="Madera M."/>
            <person name="Marchionni L."/>
            <person name="Matsuda H."/>
            <person name="Matsuzawa S."/>
            <person name="Miki H."/>
            <person name="Mignone F."/>
            <person name="Miyake S."/>
            <person name="Morris K."/>
            <person name="Mottagui-Tabar S."/>
            <person name="Mulder N."/>
            <person name="Nakano N."/>
            <person name="Nakauchi H."/>
            <person name="Ng P."/>
            <person name="Nilsson R."/>
            <person name="Nishiguchi S."/>
            <person name="Nishikawa S."/>
            <person name="Nori F."/>
            <person name="Ohara O."/>
            <person name="Okazaki Y."/>
            <person name="Orlando V."/>
            <person name="Pang K.C."/>
            <person name="Pavan W.J."/>
            <person name="Pavesi G."/>
            <person name="Pesole G."/>
            <person name="Petrovsky N."/>
            <person name="Piazza S."/>
            <person name="Reed J."/>
            <person name="Reid J.F."/>
            <person name="Ring B.Z."/>
            <person name="Ringwald M."/>
            <person name="Rost B."/>
            <person name="Ruan Y."/>
            <person name="Salzberg S.L."/>
            <person name="Sandelin A."/>
            <person name="Schneider C."/>
            <person name="Schoenbach C."/>
            <person name="Sekiguchi K."/>
            <person name="Semple C.A."/>
            <person name="Seno S."/>
            <person name="Sessa L."/>
            <person name="Sheng Y."/>
            <person name="Shibata Y."/>
            <person name="Shimada H."/>
            <person name="Shimada K."/>
            <person name="Silva D."/>
            <person name="Sinclair B."/>
            <person name="Sperling S."/>
            <person name="Stupka E."/>
            <person name="Sugiura K."/>
            <person name="Sultana R."/>
            <person name="Takenaka Y."/>
            <person name="Taki K."/>
            <person name="Tammoja K."/>
            <person name="Tan S.L."/>
            <person name="Tang S."/>
            <person name="Taylor M.S."/>
            <person name="Tegner J."/>
            <person name="Teichmann S.A."/>
            <person name="Ueda H.R."/>
            <person name="van Nimwegen E."/>
            <person name="Verardo R."/>
            <person name="Wei C.L."/>
            <person name="Yagi K."/>
            <person name="Yamanishi H."/>
            <person name="Zabarovsky E."/>
            <person name="Zhu S."/>
            <person name="Zimmer A."/>
            <person name="Hide W."/>
            <person name="Bult C."/>
            <person name="Grimmond S.M."/>
            <person name="Teasdale R.D."/>
            <person name="Liu E.T."/>
            <person name="Brusic V."/>
            <person name="Quackenbush J."/>
            <person name="Wahlestedt C."/>
            <person name="Mattick J.S."/>
            <person name="Hume D.A."/>
            <person name="Kai C."/>
            <person name="Sasaki D."/>
            <person name="Tomaru Y."/>
            <person name="Fukuda S."/>
            <person name="Kanamori-Katayama M."/>
            <person name="Suzuki M."/>
            <person name="Aoki J."/>
            <person name="Arakawa T."/>
            <person name="Iida J."/>
            <person name="Imamura K."/>
            <person name="Itoh M."/>
            <person name="Kato T."/>
            <person name="Kawaji H."/>
            <person name="Kawagashira N."/>
            <person name="Kawashima T."/>
            <person name="Kojima M."/>
            <person name="Kondo S."/>
            <person name="Konno H."/>
            <person name="Nakano K."/>
            <person name="Ninomiya N."/>
            <person name="Nishio T."/>
            <person name="Okada M."/>
            <person name="Plessy C."/>
            <person name="Shibata K."/>
            <person name="Shiraki T."/>
            <person name="Suzuki S."/>
            <person name="Tagami M."/>
            <person name="Waki K."/>
            <person name="Watahiki A."/>
            <person name="Okamura-Oho Y."/>
            <person name="Suzuki H."/>
            <person name="Kawai J."/>
            <person name="Hayashizaki Y."/>
        </authorList>
    </citation>
    <scope>NUCLEOTIDE SEQUENCE [LARGE SCALE MRNA]</scope>
    <source>
        <strain>C57BL/6J</strain>
        <tissue>Mammary gland</tissue>
        <tissue>Visual cortex</tissue>
    </source>
</reference>
<accession>Q80UN1</accession>
<accession>Q3TLH9</accession>
<accession>Q3TY35</accession>
<proteinExistence type="evidence at transcript level"/>
<name>KCTD9_MOUSE</name>
<keyword id="KW-0597">Phosphoprotein</keyword>
<keyword id="KW-1185">Reference proteome</keyword>
<keyword id="KW-0677">Repeat</keyword>
<keyword id="KW-0833">Ubl conjugation pathway</keyword>
<dbReference type="EMBL" id="AK158922">
    <property type="protein sequence ID" value="BAE34728.1"/>
    <property type="molecule type" value="mRNA"/>
</dbReference>
<dbReference type="EMBL" id="AK166501">
    <property type="protein sequence ID" value="BAE38813.1"/>
    <property type="molecule type" value="mRNA"/>
</dbReference>
<dbReference type="CCDS" id="CCDS27230.2"/>
<dbReference type="RefSeq" id="NP_001104498.1">
    <property type="nucleotide sequence ID" value="NM_001111028.1"/>
</dbReference>
<dbReference type="RefSeq" id="NP_001272862.1">
    <property type="nucleotide sequence ID" value="NM_001285933.1"/>
</dbReference>
<dbReference type="RefSeq" id="NP_598834.2">
    <property type="nucleotide sequence ID" value="NM_134073.2"/>
</dbReference>
<dbReference type="SMR" id="Q80UN1"/>
<dbReference type="BioGRID" id="222857">
    <property type="interactions" value="2"/>
</dbReference>
<dbReference type="FunCoup" id="Q80UN1">
    <property type="interactions" value="730"/>
</dbReference>
<dbReference type="IntAct" id="Q80UN1">
    <property type="interactions" value="1"/>
</dbReference>
<dbReference type="STRING" id="10090.ENSMUSP00000114489"/>
<dbReference type="PhosphoSitePlus" id="Q80UN1"/>
<dbReference type="ProteomicsDB" id="269454"/>
<dbReference type="Antibodypedia" id="22883">
    <property type="antibodies" value="248 antibodies from 22 providers"/>
</dbReference>
<dbReference type="DNASU" id="105440"/>
<dbReference type="Ensembl" id="ENSMUST00000078053.13">
    <property type="protein sequence ID" value="ENSMUSP00000077200.7"/>
    <property type="gene ID" value="ENSMUSG00000034327.19"/>
</dbReference>
<dbReference type="GeneID" id="105440"/>
<dbReference type="KEGG" id="mmu:105440"/>
<dbReference type="UCSC" id="uc007ulg.2">
    <property type="organism name" value="mouse"/>
</dbReference>
<dbReference type="AGR" id="MGI:2145579"/>
<dbReference type="CTD" id="54793"/>
<dbReference type="MGI" id="MGI:2145579">
    <property type="gene designation" value="Kctd9"/>
</dbReference>
<dbReference type="VEuPathDB" id="HostDB:ENSMUSG00000034327"/>
<dbReference type="GeneTree" id="ENSGT00940000154314"/>
<dbReference type="InParanoid" id="Q80UN1"/>
<dbReference type="OrthoDB" id="9989223at2759"/>
<dbReference type="PhylomeDB" id="Q80UN1"/>
<dbReference type="UniPathway" id="UPA00143"/>
<dbReference type="BioGRID-ORCS" id="105440">
    <property type="hits" value="2 hits in 78 CRISPR screens"/>
</dbReference>
<dbReference type="ChiTaRS" id="Kctd9">
    <property type="organism name" value="mouse"/>
</dbReference>
<dbReference type="PRO" id="PR:Q80UN1"/>
<dbReference type="Proteomes" id="UP000000589">
    <property type="component" value="Chromosome 14"/>
</dbReference>
<dbReference type="RNAct" id="Q80UN1">
    <property type="molecule type" value="protein"/>
</dbReference>
<dbReference type="Bgee" id="ENSMUSG00000034327">
    <property type="expression patterns" value="Expressed in spermatid and 249 other cell types or tissues"/>
</dbReference>
<dbReference type="ExpressionAtlas" id="Q80UN1">
    <property type="expression patterns" value="baseline and differential"/>
</dbReference>
<dbReference type="GO" id="GO:0097602">
    <property type="term" value="F:cullin family protein binding"/>
    <property type="evidence" value="ECO:0000250"/>
    <property type="project" value="UniProtKB"/>
</dbReference>
<dbReference type="GO" id="GO:0048469">
    <property type="term" value="P:cell maturation"/>
    <property type="evidence" value="ECO:0000315"/>
    <property type="project" value="MGI"/>
</dbReference>
<dbReference type="GO" id="GO:0010467">
    <property type="term" value="P:gene expression"/>
    <property type="evidence" value="ECO:0000315"/>
    <property type="project" value="MGI"/>
</dbReference>
<dbReference type="GO" id="GO:0035556">
    <property type="term" value="P:intracellular signal transduction"/>
    <property type="evidence" value="ECO:0007669"/>
    <property type="project" value="InterPro"/>
</dbReference>
<dbReference type="GO" id="GO:0043320">
    <property type="term" value="P:natural killer cell degranulation"/>
    <property type="evidence" value="ECO:0000315"/>
    <property type="project" value="MGI"/>
</dbReference>
<dbReference type="GO" id="GO:0001779">
    <property type="term" value="P:natural killer cell differentiation"/>
    <property type="evidence" value="ECO:0000315"/>
    <property type="project" value="MGI"/>
</dbReference>
<dbReference type="GO" id="GO:0001787">
    <property type="term" value="P:natural killer cell proliferation"/>
    <property type="evidence" value="ECO:0000315"/>
    <property type="project" value="MGI"/>
</dbReference>
<dbReference type="GO" id="GO:0002364">
    <property type="term" value="P:NK T cell lineage commitment"/>
    <property type="evidence" value="ECO:0000315"/>
    <property type="project" value="MGI"/>
</dbReference>
<dbReference type="GO" id="GO:0051260">
    <property type="term" value="P:protein homooligomerization"/>
    <property type="evidence" value="ECO:0007669"/>
    <property type="project" value="InterPro"/>
</dbReference>
<dbReference type="GO" id="GO:0016567">
    <property type="term" value="P:protein ubiquitination"/>
    <property type="evidence" value="ECO:0007669"/>
    <property type="project" value="UniProtKB-UniPathway"/>
</dbReference>
<dbReference type="GO" id="GO:0002347">
    <property type="term" value="P:response to tumor cell"/>
    <property type="evidence" value="ECO:0000315"/>
    <property type="project" value="MGI"/>
</dbReference>
<dbReference type="GO" id="GO:0009615">
    <property type="term" value="P:response to virus"/>
    <property type="evidence" value="ECO:0000315"/>
    <property type="project" value="MGI"/>
</dbReference>
<dbReference type="CDD" id="cd18368">
    <property type="entry name" value="BTB_POZ_KCTD9"/>
    <property type="match status" value="1"/>
</dbReference>
<dbReference type="CDD" id="cd17073">
    <property type="entry name" value="KHA"/>
    <property type="match status" value="1"/>
</dbReference>
<dbReference type="FunFam" id="3.30.710.10:FF:000044">
    <property type="entry name" value="BTB/POZ domain-containing protein KCTD9 isoform X1"/>
    <property type="match status" value="1"/>
</dbReference>
<dbReference type="FunFam" id="2.160.20.80:FF:000002">
    <property type="entry name" value="Potassium channel tetramerization domain-containing 9a"/>
    <property type="match status" value="1"/>
</dbReference>
<dbReference type="Gene3D" id="2.160.20.80">
    <property type="entry name" value="E3 ubiquitin-protein ligase SopA"/>
    <property type="match status" value="1"/>
</dbReference>
<dbReference type="Gene3D" id="3.30.710.10">
    <property type="entry name" value="Potassium Channel Kv1.1, Chain A"/>
    <property type="match status" value="1"/>
</dbReference>
<dbReference type="InterPro" id="IPR001646">
    <property type="entry name" value="5peptide_repeat"/>
</dbReference>
<dbReference type="InterPro" id="IPR000210">
    <property type="entry name" value="BTB/POZ_dom"/>
</dbReference>
<dbReference type="InterPro" id="IPR036572">
    <property type="entry name" value="Doublecortin_dom_sf"/>
</dbReference>
<dbReference type="InterPro" id="IPR021789">
    <property type="entry name" value="KHA_dom"/>
</dbReference>
<dbReference type="InterPro" id="IPR051082">
    <property type="entry name" value="Pentapeptide-BTB/POZ_domain"/>
</dbReference>
<dbReference type="InterPro" id="IPR011333">
    <property type="entry name" value="SKP1/BTB/POZ_sf"/>
</dbReference>
<dbReference type="InterPro" id="IPR003131">
    <property type="entry name" value="T1-type_BTB"/>
</dbReference>
<dbReference type="PANTHER" id="PTHR14136">
    <property type="entry name" value="BTB_POZ DOMAIN-CONTAINING PROTEIN KCTD9"/>
    <property type="match status" value="1"/>
</dbReference>
<dbReference type="PANTHER" id="PTHR14136:SF17">
    <property type="entry name" value="BTB_POZ DOMAIN-CONTAINING PROTEIN KCTD9"/>
    <property type="match status" value="1"/>
</dbReference>
<dbReference type="Pfam" id="PF02214">
    <property type="entry name" value="BTB_2"/>
    <property type="match status" value="1"/>
</dbReference>
<dbReference type="Pfam" id="PF11834">
    <property type="entry name" value="KHA"/>
    <property type="match status" value="1"/>
</dbReference>
<dbReference type="Pfam" id="PF00805">
    <property type="entry name" value="Pentapeptide"/>
    <property type="match status" value="1"/>
</dbReference>
<dbReference type="SMART" id="SM00225">
    <property type="entry name" value="BTB"/>
    <property type="match status" value="1"/>
</dbReference>
<dbReference type="SUPFAM" id="SSF89837">
    <property type="entry name" value="Doublecortin (DC)"/>
    <property type="match status" value="1"/>
</dbReference>
<dbReference type="SUPFAM" id="SSF141571">
    <property type="entry name" value="Pentapeptide repeat-like"/>
    <property type="match status" value="1"/>
</dbReference>
<dbReference type="SUPFAM" id="SSF54695">
    <property type="entry name" value="POZ domain"/>
    <property type="match status" value="1"/>
</dbReference>
<dbReference type="PROSITE" id="PS50097">
    <property type="entry name" value="BTB"/>
    <property type="match status" value="1"/>
</dbReference>
<dbReference type="PROSITE" id="PS51490">
    <property type="entry name" value="KHA"/>
    <property type="match status" value="1"/>
</dbReference>
<evidence type="ECO:0000250" key="1">
    <source>
        <dbReference type="UniProtKB" id="Q7L273"/>
    </source>
</evidence>
<evidence type="ECO:0000255" key="2">
    <source>
        <dbReference type="PROSITE-ProRule" id="PRU00037"/>
    </source>
</evidence>
<evidence type="ECO:0000255" key="3">
    <source>
        <dbReference type="PROSITE-ProRule" id="PRU00823"/>
    </source>
</evidence>
<evidence type="ECO:0000305" key="4"/>
<feature type="chain" id="PRO_0000191294" description="BTB/POZ domain-containing protein KCTD9">
    <location>
        <begin position="1"/>
        <end position="339"/>
    </location>
</feature>
<feature type="domain" description="KHA" evidence="3">
    <location>
        <begin position="3"/>
        <end position="82"/>
    </location>
</feature>
<feature type="domain" description="BTB" evidence="2">
    <location>
        <begin position="89"/>
        <end position="161"/>
    </location>
</feature>
<feature type="domain" description="Pentapeptide repeat 1">
    <location>
        <begin position="223"/>
        <end position="247"/>
    </location>
</feature>
<feature type="domain" description="Pentapeptide repeat 2">
    <location>
        <begin position="253"/>
        <end position="292"/>
    </location>
</feature>
<feature type="domain" description="Pentapeptide repeat 3">
    <location>
        <begin position="293"/>
        <end position="327"/>
    </location>
</feature>
<feature type="modified residue" description="Phosphoserine" evidence="1">
    <location>
        <position position="11"/>
    </location>
</feature>
<feature type="sequence conflict" description="In Ref. 1; BAE38813." evidence="4" ref="1">
    <original>S</original>
    <variation>R</variation>
    <location>
        <position position="13"/>
    </location>
</feature>
<feature type="sequence conflict" description="In Ref. 1; BAE38813." evidence="4" ref="1">
    <original>E</original>
    <variation>K</variation>
    <location>
        <position position="301"/>
    </location>
</feature>
<organism>
    <name type="scientific">Mus musculus</name>
    <name type="common">Mouse</name>
    <dbReference type="NCBI Taxonomy" id="10090"/>
    <lineage>
        <taxon>Eukaryota</taxon>
        <taxon>Metazoa</taxon>
        <taxon>Chordata</taxon>
        <taxon>Craniata</taxon>
        <taxon>Vertebrata</taxon>
        <taxon>Euteleostomi</taxon>
        <taxon>Mammalia</taxon>
        <taxon>Eutheria</taxon>
        <taxon>Euarchontoglires</taxon>
        <taxon>Glires</taxon>
        <taxon>Rodentia</taxon>
        <taxon>Myomorpha</taxon>
        <taxon>Muroidea</taxon>
        <taxon>Muridae</taxon>
        <taxon>Murinae</taxon>
        <taxon>Mus</taxon>
        <taxon>Mus</taxon>
    </lineage>
</organism>
<protein>
    <recommendedName>
        <fullName>BTB/POZ domain-containing protein KCTD9</fullName>
    </recommendedName>
</protein>